<protein>
    <recommendedName>
        <fullName>Sodium-dependent serotonin transporter</fullName>
        <shortName evidence="3">SERT</shortName>
    </recommendedName>
    <alternativeName>
        <fullName>5HT transporter</fullName>
        <shortName>5HTT</shortName>
    </alternativeName>
    <alternativeName>
        <fullName>Solute carrier family 6 member 4</fullName>
    </alternativeName>
</protein>
<keyword id="KW-0050">Antiport</keyword>
<keyword id="KW-0965">Cell junction</keyword>
<keyword id="KW-1003">Cell membrane</keyword>
<keyword id="KW-0966">Cell projection</keyword>
<keyword id="KW-1015">Disulfide bond</keyword>
<keyword id="KW-0967">Endosome</keyword>
<keyword id="KW-0325">Glycoprotein</keyword>
<keyword id="KW-0472">Membrane</keyword>
<keyword id="KW-0479">Metal-binding</keyword>
<keyword id="KW-0532">Neurotransmitter transport</keyword>
<keyword id="KW-0597">Phosphoprotein</keyword>
<keyword id="KW-1185">Reference proteome</keyword>
<keyword id="KW-0915">Sodium</keyword>
<keyword id="KW-0770">Synapse</keyword>
<keyword id="KW-0812">Transmembrane</keyword>
<keyword id="KW-1133">Transmembrane helix</keyword>
<keyword id="KW-0813">Transport</keyword>
<accession>O35899</accession>
<sequence length="630" mass="70114">METTALNSQKAPSVCKDREDCQENSILQKSGPTSAGGVESGQIFNGYSSVPSTGMGDDAEHSVPTATTTLVAEVHHGERETWGKKVDFLLSVIGYAVDLGNIWRFPYVCYQNGGGAFLLPYIIMAIFGGIPLFYMELALGQYHRNGCISIWRKICPIFKGIGYTICIIAFYIASYYNTIIAWALYYLISSFTDRLPWTSCRNSWNTANCTNYFSEDNITWTLHSTSPAEEFYIRHILQIHRSKGLQDVGGVSWQLTLCIMLIFTIIYFSIWKGVKTSGKVVWVTATFPYIVLSVLLVRGATLPGAWKGVLFYLKPNWQKLLETGVWIDAAAQIFFSLGPGFGVLLAFASYNKFNNNCYQDALVTSAVNCMTSFVSGFVIFTVLGYMAEMRSEDVSEVAKDAGPSLLFITYAEAIANMPASTFFAIIFFLMLITLGLDSTFAGLEGVITAVLDEFPHIWAKHREWFVLAVVITCFFGSLTTLTFGGAYVVKLLEEYATGPAVLTVVFIEAIAVSWFYGVTQFCSDVKEMLGFSPGWFWRICWVAVSPVFLLFIICSFLMSPPQLRLFQYSYPHWSVILGYCIGTSSVICIPTYITYRLVTTPGTLKERIIKSITPETPTEIPCGDICLNAV</sequence>
<dbReference type="EMBL" id="U84498">
    <property type="protein sequence ID" value="AAB82737.1"/>
    <property type="molecule type" value="mRNA"/>
</dbReference>
<dbReference type="RefSeq" id="NP_001166489.1">
    <property type="nucleotide sequence ID" value="NM_001173018.1"/>
</dbReference>
<dbReference type="SMR" id="O35899"/>
<dbReference type="FunCoup" id="O35899">
    <property type="interactions" value="255"/>
</dbReference>
<dbReference type="STRING" id="10141.ENSCPOP00000009516"/>
<dbReference type="BindingDB" id="O35899"/>
<dbReference type="GlyCosmos" id="O35899">
    <property type="glycosylation" value="2 sites, No reported glycans"/>
</dbReference>
<dbReference type="GeneID" id="100135619"/>
<dbReference type="KEGG" id="cpoc:100135619"/>
<dbReference type="CTD" id="6532"/>
<dbReference type="eggNOG" id="KOG3659">
    <property type="taxonomic scope" value="Eukaryota"/>
</dbReference>
<dbReference type="InParanoid" id="O35899"/>
<dbReference type="OrthoDB" id="6581954at2759"/>
<dbReference type="Proteomes" id="UP000005447">
    <property type="component" value="Unassembled WGS sequence"/>
</dbReference>
<dbReference type="GO" id="GO:0012505">
    <property type="term" value="C:endomembrane system"/>
    <property type="evidence" value="ECO:0000250"/>
    <property type="project" value="UniProtKB"/>
</dbReference>
<dbReference type="GO" id="GO:0010008">
    <property type="term" value="C:endosome membrane"/>
    <property type="evidence" value="ECO:0007669"/>
    <property type="project" value="UniProtKB-SubCell"/>
</dbReference>
<dbReference type="GO" id="GO:0005925">
    <property type="term" value="C:focal adhesion"/>
    <property type="evidence" value="ECO:0000250"/>
    <property type="project" value="UniProtKB"/>
</dbReference>
<dbReference type="GO" id="GO:0043005">
    <property type="term" value="C:neuron projection"/>
    <property type="evidence" value="ECO:0007669"/>
    <property type="project" value="UniProtKB-SubCell"/>
</dbReference>
<dbReference type="GO" id="GO:0005886">
    <property type="term" value="C:plasma membrane"/>
    <property type="evidence" value="ECO:0000250"/>
    <property type="project" value="UniProtKB"/>
</dbReference>
<dbReference type="GO" id="GO:0098793">
    <property type="term" value="C:presynapse"/>
    <property type="evidence" value="ECO:0007669"/>
    <property type="project" value="GOC"/>
</dbReference>
<dbReference type="GO" id="GO:0045202">
    <property type="term" value="C:synapse"/>
    <property type="evidence" value="ECO:0000250"/>
    <property type="project" value="UniProtKB"/>
</dbReference>
<dbReference type="GO" id="GO:0051015">
    <property type="term" value="F:actin filament binding"/>
    <property type="evidence" value="ECO:0000250"/>
    <property type="project" value="UniProtKB"/>
</dbReference>
<dbReference type="GO" id="GO:0015297">
    <property type="term" value="F:antiporter activity"/>
    <property type="evidence" value="ECO:0007669"/>
    <property type="project" value="UniProtKB-KW"/>
</dbReference>
<dbReference type="GO" id="GO:0042802">
    <property type="term" value="F:identical protein binding"/>
    <property type="evidence" value="ECO:0000250"/>
    <property type="project" value="UniProtKB"/>
</dbReference>
<dbReference type="GO" id="GO:0005178">
    <property type="term" value="F:integrin binding"/>
    <property type="evidence" value="ECO:0000250"/>
    <property type="project" value="UniProtKB"/>
</dbReference>
<dbReference type="GO" id="GO:0005261">
    <property type="term" value="F:monoatomic cation channel activity"/>
    <property type="evidence" value="ECO:0000250"/>
    <property type="project" value="UniProtKB"/>
</dbReference>
<dbReference type="GO" id="GO:0051378">
    <property type="term" value="F:serotonin binding"/>
    <property type="evidence" value="ECO:0000250"/>
    <property type="project" value="UniProtKB"/>
</dbReference>
<dbReference type="GO" id="GO:0005335">
    <property type="term" value="F:serotonin:sodium:chloride symporter activity"/>
    <property type="evidence" value="ECO:0000315"/>
    <property type="project" value="UniProtKB"/>
</dbReference>
<dbReference type="GO" id="GO:0031402">
    <property type="term" value="F:sodium ion binding"/>
    <property type="evidence" value="ECO:0000250"/>
    <property type="project" value="UniProtKB"/>
</dbReference>
<dbReference type="GO" id="GO:0006865">
    <property type="term" value="P:amino acid transport"/>
    <property type="evidence" value="ECO:0007669"/>
    <property type="project" value="TreeGrafter"/>
</dbReference>
<dbReference type="GO" id="GO:0051899">
    <property type="term" value="P:membrane depolarization"/>
    <property type="evidence" value="ECO:0000250"/>
    <property type="project" value="UniProtKB"/>
</dbReference>
<dbReference type="GO" id="GO:0070527">
    <property type="term" value="P:platelet aggregation"/>
    <property type="evidence" value="ECO:0000250"/>
    <property type="project" value="UniProtKB"/>
</dbReference>
<dbReference type="GO" id="GO:0090067">
    <property type="term" value="P:regulation of thalamus size"/>
    <property type="evidence" value="ECO:0000250"/>
    <property type="project" value="UniProtKB"/>
</dbReference>
<dbReference type="GO" id="GO:0051610">
    <property type="term" value="P:serotonin uptake"/>
    <property type="evidence" value="ECO:0000250"/>
    <property type="project" value="UniProtKB"/>
</dbReference>
<dbReference type="CDD" id="cd11513">
    <property type="entry name" value="SLC6sbd_SERT"/>
    <property type="match status" value="1"/>
</dbReference>
<dbReference type="InterPro" id="IPR000175">
    <property type="entry name" value="Na/ntran_symport"/>
</dbReference>
<dbReference type="InterPro" id="IPR013086">
    <property type="entry name" value="Na/ntran_symport_serotonin_N"/>
</dbReference>
<dbReference type="InterPro" id="IPR037272">
    <property type="entry name" value="SNS_sf"/>
</dbReference>
<dbReference type="NCBIfam" id="NF037979">
    <property type="entry name" value="Na_transp"/>
    <property type="match status" value="1"/>
</dbReference>
<dbReference type="PANTHER" id="PTHR11616:SF105">
    <property type="entry name" value="SODIUM-DEPENDENT SEROTONIN TRANSPORTER"/>
    <property type="match status" value="1"/>
</dbReference>
<dbReference type="PANTHER" id="PTHR11616">
    <property type="entry name" value="SODIUM/CHLORIDE DEPENDENT TRANSPORTER"/>
    <property type="match status" value="1"/>
</dbReference>
<dbReference type="Pfam" id="PF03491">
    <property type="entry name" value="5HT_transport_N"/>
    <property type="match status" value="1"/>
</dbReference>
<dbReference type="Pfam" id="PF00209">
    <property type="entry name" value="SNF"/>
    <property type="match status" value="1"/>
</dbReference>
<dbReference type="PRINTS" id="PR01203">
    <property type="entry name" value="5HTTRANSPORT"/>
</dbReference>
<dbReference type="PRINTS" id="PR00176">
    <property type="entry name" value="NANEUSMPORT"/>
</dbReference>
<dbReference type="SUPFAM" id="SSF161070">
    <property type="entry name" value="SNF-like"/>
    <property type="match status" value="1"/>
</dbReference>
<dbReference type="PROSITE" id="PS00610">
    <property type="entry name" value="NA_NEUROTRAN_SYMP_1"/>
    <property type="match status" value="1"/>
</dbReference>
<dbReference type="PROSITE" id="PS00754">
    <property type="entry name" value="NA_NEUROTRAN_SYMP_2"/>
    <property type="match status" value="1"/>
</dbReference>
<dbReference type="PROSITE" id="PS50267">
    <property type="entry name" value="NA_NEUROTRAN_SYMP_3"/>
    <property type="match status" value="1"/>
</dbReference>
<organism>
    <name type="scientific">Cavia porcellus</name>
    <name type="common">Guinea pig</name>
    <dbReference type="NCBI Taxonomy" id="10141"/>
    <lineage>
        <taxon>Eukaryota</taxon>
        <taxon>Metazoa</taxon>
        <taxon>Chordata</taxon>
        <taxon>Craniata</taxon>
        <taxon>Vertebrata</taxon>
        <taxon>Euteleostomi</taxon>
        <taxon>Mammalia</taxon>
        <taxon>Eutheria</taxon>
        <taxon>Euarchontoglires</taxon>
        <taxon>Glires</taxon>
        <taxon>Rodentia</taxon>
        <taxon>Hystricomorpha</taxon>
        <taxon>Caviidae</taxon>
        <taxon>Cavia</taxon>
    </lineage>
</organism>
<comment type="function">
    <text evidence="2 3 4 7">Serotonin transporter that cotransports serotonin with one Na(+) ion in exchange for one K(+) ion and possibly one proton in an overall electroneutral transport cycle. Transports serotonin across the plasma membrane from the extracellular compartment to the cytosol thus limiting serotonin intercellular signaling (By similarity) (PubMed:8601815). Essential for serotonin homeostasis in the central nervous system. In the developing somatosensory cortex, acts in glutamatergic neurons to control serotonin uptake and its trophic functions accounting for proper spatial organization of cortical neurons and elaboration of sensory circuits. In the mature cortex, acts primarily in brainstem raphe neurons to mediate serotonin uptake from the synaptic cleft back into the pre-synaptic terminal thus terminating serotonin signaling at the synapse (By similarity). Modulates mucosal serotonin levels in the gastrointestinal tract through uptake and clearance of serotonin in enterocytes. Required for enteric neurogenesis and gastrointestinal reflexes (By similarity). Regulates blood serotonin levels by ensuring rapid high affinity uptake of serotonin from plasma to platelets, where it is further stored in dense granules via vesicular monoamine transporters and then released upon stimulation. Mechanistically, the transport cycle starts with an outward-open conformation having Na1(+) and Cl(-) sites occupied. The binding of a second extracellular Na2(+) ion and serotonin substrate leads to structural changes to outward-occluded to inward-occluded to inward-open, where the Na2(+) ion and serotonin are released into the cytosol. Binding of intracellular K(+) ion induces conformational transitions to inward-occluded to outward-open and completes the cycle by releasing K(+) possibly together with a proton bound to Asp-98 into the extracellular compartment. Na1(+) and Cl(-) ions remain bound throughout the transport cycle (By similarity) (PubMed:8601815). Additionally, displays serotonin-induced channel-like conductance for monovalent cations, mainly Na(+) ions. The channel activity is uncoupled from the transport cycle and may contribute to the membrane resting potential or excitability (By similarity).</text>
</comment>
<comment type="catalytic activity">
    <reaction evidence="2 7">
        <text>serotonin(out) + K(+)(in) + Na(+)(out) + H(+)(in) = serotonin(in) + K(+)(out) + Na(+)(in) + H(+)(out)</text>
        <dbReference type="Rhea" id="RHEA:75839"/>
        <dbReference type="ChEBI" id="CHEBI:15378"/>
        <dbReference type="ChEBI" id="CHEBI:29101"/>
        <dbReference type="ChEBI" id="CHEBI:29103"/>
        <dbReference type="ChEBI" id="CHEBI:350546"/>
    </reaction>
    <physiologicalReaction direction="left-to-right" evidence="2 9">
        <dbReference type="Rhea" id="RHEA:75840"/>
    </physiologicalReaction>
</comment>
<comment type="subunit">
    <text evidence="2 3 4">Monomer or homooligomer (By similarity). Interacts (via C-terminus) with SCAMP2; the interaction is direct and retains transporter molecules intracellularly. Interacts with filamentous actin and STX1A (By similarity). Interacts (via the N-terminus) with STX1A (via the H3 domain); this interaction regulates SLC4A6 channel conductance (By similarity). Interacts with SEC23A, SEC24C and PATJ. Interacts with NOS1; the interaction may diminish the cell surface localization of SERT in the brain and, correspondingly, reduce serotonin reuptake. Interacts with TGFB1I1 (By similarity). Interacts with ITGAV:ITGB3 (By similarity). Interacts (via C-terminus) with ITGB3; this interaction regulates SLC6A4 trafficking (By similarity).</text>
</comment>
<comment type="subcellular location">
    <subcellularLocation>
        <location evidence="2">Cell membrane</location>
        <topology evidence="6">Multi-pass membrane protein</topology>
    </subcellularLocation>
    <subcellularLocation>
        <location evidence="3">Endomembrane system</location>
        <topology evidence="6">Multi-pass membrane protein</topology>
    </subcellularLocation>
    <subcellularLocation>
        <location evidence="3">Endosome membrane</location>
        <topology evidence="6">Multi-pass membrane protein</topology>
    </subcellularLocation>
    <subcellularLocation>
        <location evidence="4">Synapse</location>
    </subcellularLocation>
    <subcellularLocation>
        <location evidence="4">Cell junction</location>
        <location evidence="4">Focal adhesion</location>
    </subcellularLocation>
    <subcellularLocation>
        <location evidence="4">Cell projection</location>
        <location evidence="4">Neuron projection</location>
    </subcellularLocation>
    <text evidence="2 3 4">Could be part of recycling endosomes. Density of transporter molecules on the plasma membrane is itself regulated by STX1A. Density of transporter molecules on the plasma membrane is also regulated by serotonin (By similarity). Density of transporter molecules seems to be modulated by ITGAV:ITGB3 (By similarity).</text>
</comment>
<comment type="tissue specificity">
    <text evidence="7">Expressed in the intestinal crypt epithelial cells (at protein level).</text>
</comment>
<comment type="PTM">
    <text evidence="2">Phosphorylation at Thr-276 increases 5-HT uptake and is required for cGMP-mediated SERT regulation.</text>
</comment>
<comment type="miscellaneous">
    <text>This protein is the target of psychomotor stimulants such as amphetamines or cocaine.</text>
</comment>
<comment type="similarity">
    <text evidence="8">Belongs to the sodium:neurotransmitter symporter (SNF) (TC 2.A.22) family. SLC6A4 subfamily.</text>
</comment>
<reference key="1">
    <citation type="journal article" date="1996" name="J. Neurosci.">
        <title>Localization and function of a 5-HT transporter in crypt epithelia of the gastrointestinal tract.</title>
        <authorList>
            <person name="Wade P.R."/>
            <person name="Chen J."/>
            <person name="Jaffe B."/>
            <person name="Kassem I.S."/>
            <person name="Blakely R.D."/>
            <person name="Gershon M.D."/>
        </authorList>
    </citation>
    <scope>NUCLEOTIDE SEQUENCE [MRNA]</scope>
    <scope>FUNCTION</scope>
    <scope>TRANSPORTER ACTIVITY</scope>
    <scope>TISSUE SPECIFICITY</scope>
    <source>
        <tissue>Intestinal mucosa</tissue>
    </source>
</reference>
<reference key="2">
    <citation type="submission" date="1997-11" db="EMBL/GenBank/DDBJ databases">
        <authorList>
            <person name="Chen J."/>
            <person name="Wade P.R."/>
            <person name="Rothman T.P."/>
            <person name="Gershon M.D."/>
        </authorList>
    </citation>
    <scope>NUCLEOTIDE SEQUENCE [MRNA]</scope>
    <source>
        <tissue>Intestinal mucosa</tissue>
    </source>
</reference>
<feature type="chain" id="PRO_0000214756" description="Sodium-dependent serotonin transporter">
    <location>
        <begin position="1"/>
        <end position="630"/>
    </location>
</feature>
<feature type="topological domain" description="Cytoplasmic" evidence="8">
    <location>
        <begin position="1"/>
        <end position="87"/>
    </location>
</feature>
<feature type="transmembrane region" description="Helical; Name=1" evidence="2">
    <location>
        <begin position="88"/>
        <end position="112"/>
    </location>
</feature>
<feature type="topological domain" description="Extracellular" evidence="8">
    <location>
        <begin position="113"/>
        <end position="115"/>
    </location>
</feature>
<feature type="transmembrane region" description="Helical; Name=2" evidence="2">
    <location>
        <begin position="116"/>
        <end position="135"/>
    </location>
</feature>
<feature type="topological domain" description="Cytoplasmic" evidence="8">
    <location>
        <begin position="136"/>
        <end position="160"/>
    </location>
</feature>
<feature type="transmembrane region" description="Helical; Name=3" evidence="2">
    <location>
        <begin position="161"/>
        <end position="186"/>
    </location>
</feature>
<feature type="topological domain" description="Extracellular" evidence="8">
    <location>
        <begin position="187"/>
        <end position="252"/>
    </location>
</feature>
<feature type="transmembrane region" description="Helical; Name=4" evidence="2">
    <location>
        <begin position="253"/>
        <end position="271"/>
    </location>
</feature>
<feature type="topological domain" description="Cytoplasmic" evidence="8">
    <location>
        <begin position="272"/>
        <end position="277"/>
    </location>
</feature>
<feature type="transmembrane region" description="Helical; Name=5" evidence="2">
    <location>
        <begin position="278"/>
        <end position="297"/>
    </location>
</feature>
<feature type="topological domain" description="Extracellular" evidence="8">
    <location>
        <begin position="298"/>
        <end position="324"/>
    </location>
</feature>
<feature type="transmembrane region" description="Helical; Name=6" evidence="2">
    <location>
        <begin position="325"/>
        <end position="347"/>
    </location>
</feature>
<feature type="topological domain" description="Cytoplasmic" evidence="8">
    <location>
        <begin position="348"/>
        <end position="360"/>
    </location>
</feature>
<feature type="transmembrane region" description="Helical; Name=7" evidence="2">
    <location>
        <begin position="361"/>
        <end position="380"/>
    </location>
</feature>
<feature type="topological domain" description="Extracellular" evidence="8">
    <location>
        <begin position="381"/>
        <end position="421"/>
    </location>
</feature>
<feature type="transmembrane region" description="Helical; Name=8" evidence="2">
    <location>
        <begin position="422"/>
        <end position="443"/>
    </location>
</feature>
<feature type="topological domain" description="Cytoplasmic" evidence="8">
    <location>
        <begin position="444"/>
        <end position="463"/>
    </location>
</feature>
<feature type="transmembrane region" description="Helical; Name=9" evidence="2">
    <location>
        <begin position="464"/>
        <end position="483"/>
    </location>
</feature>
<feature type="topological domain" description="Extracellular" evidence="8">
    <location>
        <begin position="484"/>
        <end position="494"/>
    </location>
</feature>
<feature type="transmembrane region" description="Helical; Name=10" evidence="2">
    <location>
        <begin position="495"/>
        <end position="516"/>
    </location>
</feature>
<feature type="topological domain" description="Cytoplasmic" evidence="8">
    <location>
        <begin position="517"/>
        <end position="538"/>
    </location>
</feature>
<feature type="transmembrane region" description="Helical; Name=11" evidence="2">
    <location>
        <begin position="539"/>
        <end position="558"/>
    </location>
</feature>
<feature type="topological domain" description="Extracellular" evidence="8">
    <location>
        <begin position="559"/>
        <end position="574"/>
    </location>
</feature>
<feature type="transmembrane region" description="Helical; Name=12" evidence="2">
    <location>
        <begin position="575"/>
        <end position="595"/>
    </location>
</feature>
<feature type="topological domain" description="Cytoplasmic" evidence="8">
    <location>
        <begin position="596"/>
        <end position="630"/>
    </location>
</feature>
<feature type="region of interest" description="Interaction with RAB4A" evidence="1">
    <location>
        <begin position="616"/>
        <end position="624"/>
    </location>
</feature>
<feature type="binding site" evidence="5">
    <location>
        <position position="94"/>
    </location>
    <ligand>
        <name>Na(+)</name>
        <dbReference type="ChEBI" id="CHEBI:29101"/>
        <label>1</label>
    </ligand>
</feature>
<feature type="binding site" evidence="5">
    <location>
        <position position="96"/>
    </location>
    <ligand>
        <name>Na(+)</name>
        <dbReference type="ChEBI" id="CHEBI:29101"/>
        <label>2</label>
    </ligand>
</feature>
<feature type="binding site" evidence="5">
    <location>
        <position position="97"/>
    </location>
    <ligand>
        <name>Na(+)</name>
        <dbReference type="ChEBI" id="CHEBI:29101"/>
        <label>1</label>
    </ligand>
</feature>
<feature type="binding site" evidence="2">
    <location>
        <position position="98"/>
    </location>
    <ligand>
        <name>Na(+)</name>
        <dbReference type="ChEBI" id="CHEBI:29101"/>
        <label>2</label>
    </ligand>
</feature>
<feature type="binding site" evidence="2">
    <location>
        <position position="98"/>
    </location>
    <ligand>
        <name>serotonin</name>
        <dbReference type="ChEBI" id="CHEBI:350546"/>
    </ligand>
</feature>
<feature type="binding site" evidence="5">
    <location>
        <position position="101"/>
    </location>
    <ligand>
        <name>Na(+)</name>
        <dbReference type="ChEBI" id="CHEBI:29101"/>
        <label>2</label>
    </ligand>
</feature>
<feature type="binding site" evidence="5">
    <location>
        <position position="336"/>
    </location>
    <ligand>
        <name>Na(+)</name>
        <dbReference type="ChEBI" id="CHEBI:29101"/>
        <label>2</label>
    </ligand>
</feature>
<feature type="binding site" evidence="5">
    <location>
        <position position="368"/>
    </location>
    <ligand>
        <name>Na(+)</name>
        <dbReference type="ChEBI" id="CHEBI:29101"/>
        <label>2</label>
    </ligand>
</feature>
<feature type="binding site" evidence="5">
    <location>
        <position position="434"/>
    </location>
    <ligand>
        <name>Na(+)</name>
        <dbReference type="ChEBI" id="CHEBI:29101"/>
        <label>1</label>
    </ligand>
</feature>
<feature type="binding site" evidence="5">
    <location>
        <position position="437"/>
    </location>
    <ligand>
        <name>Na(+)</name>
        <dbReference type="ChEBI" id="CHEBI:29101"/>
        <label>1</label>
    </ligand>
</feature>
<feature type="binding site" evidence="5">
    <location>
        <position position="438"/>
    </location>
    <ligand>
        <name>Na(+)</name>
        <dbReference type="ChEBI" id="CHEBI:29101"/>
        <label>1</label>
    </ligand>
</feature>
<feature type="binding site" evidence="2">
    <location>
        <position position="439"/>
    </location>
    <ligand>
        <name>serotonin</name>
        <dbReference type="ChEBI" id="CHEBI:350546"/>
    </ligand>
</feature>
<feature type="binding site" evidence="2">
    <location>
        <position position="494"/>
    </location>
    <ligand>
        <name>serotonin</name>
        <dbReference type="ChEBI" id="CHEBI:350546"/>
    </ligand>
</feature>
<feature type="binding site" evidence="2">
    <location>
        <position position="495"/>
    </location>
    <ligand>
        <name>serotonin</name>
        <dbReference type="ChEBI" id="CHEBI:350546"/>
    </ligand>
</feature>
<feature type="binding site" evidence="2">
    <location>
        <position position="556"/>
    </location>
    <ligand>
        <name>serotonin</name>
        <dbReference type="ChEBI" id="CHEBI:350546"/>
    </ligand>
</feature>
<feature type="binding site" evidence="2">
    <location>
        <position position="559"/>
    </location>
    <ligand>
        <name>serotonin</name>
        <dbReference type="ChEBI" id="CHEBI:350546"/>
    </ligand>
</feature>
<feature type="modified residue" description="Phosphotyrosine" evidence="2">
    <location>
        <position position="47"/>
    </location>
</feature>
<feature type="modified residue" description="Phosphotyrosine" evidence="2">
    <location>
        <position position="142"/>
    </location>
</feature>
<feature type="modified residue" description="Phosphothreonine" evidence="2">
    <location>
        <position position="276"/>
    </location>
</feature>
<feature type="glycosylation site" description="N-linked (GlcNAc...) asparagine" evidence="2 6">
    <location>
        <position position="208"/>
    </location>
</feature>
<feature type="glycosylation site" description="N-linked (GlcNAc...) asparagine" evidence="2 6">
    <location>
        <position position="217"/>
    </location>
</feature>
<feature type="disulfide bond" evidence="2">
    <location>
        <begin position="200"/>
        <end position="209"/>
    </location>
</feature>
<proteinExistence type="evidence at protein level"/>
<evidence type="ECO:0000250" key="1"/>
<evidence type="ECO:0000250" key="2">
    <source>
        <dbReference type="UniProtKB" id="P31645"/>
    </source>
</evidence>
<evidence type="ECO:0000250" key="3">
    <source>
        <dbReference type="UniProtKB" id="P31652"/>
    </source>
</evidence>
<evidence type="ECO:0000250" key="4">
    <source>
        <dbReference type="UniProtKB" id="Q60857"/>
    </source>
</evidence>
<evidence type="ECO:0000250" key="5">
    <source>
        <dbReference type="UniProtKB" id="Q7K4Y6"/>
    </source>
</evidence>
<evidence type="ECO:0000255" key="6"/>
<evidence type="ECO:0000269" key="7">
    <source>
    </source>
</evidence>
<evidence type="ECO:0000305" key="8"/>
<evidence type="ECO:0000305" key="9">
    <source>
    </source>
</evidence>
<name>SC6A4_CAVPO</name>
<gene>
    <name type="primary">SLC6A4</name>
</gene>